<proteinExistence type="inferred from homology"/>
<accession>F0PBT2</accession>
<protein>
    <recommendedName>
        <fullName evidence="1">Cell division protein DivIB</fullName>
    </recommendedName>
</protein>
<dbReference type="EMBL" id="CP002491">
    <property type="protein sequence ID" value="ADX79673.1"/>
    <property type="molecule type" value="Genomic_DNA"/>
</dbReference>
<dbReference type="RefSeq" id="WP_002358888.1">
    <property type="nucleotide sequence ID" value="NC_017312.1"/>
</dbReference>
<dbReference type="KEGG" id="efl:EF62_1429"/>
<dbReference type="PATRIC" id="fig|936153.3.peg.1390"/>
<dbReference type="GO" id="GO:0032153">
    <property type="term" value="C:cell division site"/>
    <property type="evidence" value="ECO:0007669"/>
    <property type="project" value="UniProtKB-UniRule"/>
</dbReference>
<dbReference type="GO" id="GO:0005886">
    <property type="term" value="C:plasma membrane"/>
    <property type="evidence" value="ECO:0007669"/>
    <property type="project" value="UniProtKB-SubCell"/>
</dbReference>
<dbReference type="GO" id="GO:0043093">
    <property type="term" value="P:FtsZ-dependent cytokinesis"/>
    <property type="evidence" value="ECO:0007669"/>
    <property type="project" value="UniProtKB-UniRule"/>
</dbReference>
<dbReference type="Gene3D" id="3.40.50.10960">
    <property type="match status" value="1"/>
</dbReference>
<dbReference type="HAMAP" id="MF_00912">
    <property type="entry name" value="DivIB"/>
    <property type="match status" value="1"/>
</dbReference>
<dbReference type="InterPro" id="IPR005548">
    <property type="entry name" value="Cell_div_FtsQ/DivIB_C"/>
</dbReference>
<dbReference type="InterPro" id="IPR026580">
    <property type="entry name" value="DivIB"/>
</dbReference>
<dbReference type="InterPro" id="IPR050487">
    <property type="entry name" value="FtsQ_DivIB"/>
</dbReference>
<dbReference type="InterPro" id="IPR034746">
    <property type="entry name" value="POTRA"/>
</dbReference>
<dbReference type="InterPro" id="IPR013685">
    <property type="entry name" value="POTRA_FtsQ_type"/>
</dbReference>
<dbReference type="PANTHER" id="PTHR37820">
    <property type="entry name" value="CELL DIVISION PROTEIN DIVIB"/>
    <property type="match status" value="1"/>
</dbReference>
<dbReference type="PANTHER" id="PTHR37820:SF1">
    <property type="entry name" value="CELL DIVISION PROTEIN FTSQ"/>
    <property type="match status" value="1"/>
</dbReference>
<dbReference type="Pfam" id="PF03799">
    <property type="entry name" value="FtsQ_DivIB_C"/>
    <property type="match status" value="1"/>
</dbReference>
<dbReference type="Pfam" id="PF08478">
    <property type="entry name" value="POTRA_1"/>
    <property type="match status" value="1"/>
</dbReference>
<dbReference type="PROSITE" id="PS51779">
    <property type="entry name" value="POTRA"/>
    <property type="match status" value="1"/>
</dbReference>
<feature type="chain" id="PRO_0000414765" description="Cell division protein DivIB">
    <location>
        <begin position="1"/>
        <end position="374"/>
    </location>
</feature>
<feature type="topological domain" description="Cytoplasmic" evidence="1">
    <location>
        <begin position="1"/>
        <end position="103"/>
    </location>
</feature>
<feature type="transmembrane region" description="Helical" evidence="1">
    <location>
        <begin position="104"/>
        <end position="124"/>
    </location>
</feature>
<feature type="topological domain" description="Extracellular" evidence="1">
    <location>
        <begin position="125"/>
        <end position="374"/>
    </location>
</feature>
<feature type="domain" description="POTRA" evidence="2">
    <location>
        <begin position="126"/>
        <end position="197"/>
    </location>
</feature>
<feature type="region of interest" description="Disordered" evidence="3">
    <location>
        <begin position="1"/>
        <end position="90"/>
    </location>
</feature>
<feature type="region of interest" description="Disordered" evidence="3">
    <location>
        <begin position="325"/>
        <end position="374"/>
    </location>
</feature>
<feature type="compositionally biased region" description="Basic and acidic residues" evidence="3">
    <location>
        <begin position="39"/>
        <end position="53"/>
    </location>
</feature>
<feature type="compositionally biased region" description="Polar residues" evidence="3">
    <location>
        <begin position="56"/>
        <end position="75"/>
    </location>
</feature>
<feature type="compositionally biased region" description="Acidic residues" evidence="3">
    <location>
        <begin position="326"/>
        <end position="339"/>
    </location>
</feature>
<feature type="compositionally biased region" description="Polar residues" evidence="3">
    <location>
        <begin position="356"/>
        <end position="374"/>
    </location>
</feature>
<reference key="1">
    <citation type="journal article" date="2011" name="J. Bacteriol.">
        <title>Complete genome sequence of the commensal Enterococcus faecalis 62, isolated from a healthy Norwegian infant.</title>
        <authorList>
            <person name="Brede D.A."/>
            <person name="Snipen L.G."/>
            <person name="Ussery D.W."/>
            <person name="Nederbragt A.J."/>
            <person name="Nes I.F."/>
        </authorList>
    </citation>
    <scope>NUCLEOTIDE SEQUENCE [LARGE SCALE GENOMIC DNA]</scope>
    <source>
        <strain>62</strain>
    </source>
</reference>
<organism>
    <name type="scientific">Enterococcus faecalis (strain 62)</name>
    <dbReference type="NCBI Taxonomy" id="936153"/>
    <lineage>
        <taxon>Bacteria</taxon>
        <taxon>Bacillati</taxon>
        <taxon>Bacillota</taxon>
        <taxon>Bacilli</taxon>
        <taxon>Lactobacillales</taxon>
        <taxon>Enterococcaceae</taxon>
        <taxon>Enterococcus</taxon>
    </lineage>
</organism>
<sequence>MWKISNENDIFKKRKPLPPKKSEESQPELTPWQKQNQEYLKKQAEEAASKGENEQAEVTITLQEQSQEEPQQHLPQETVEEEEHFADRLPNVKKTRNKRLYRRLAFILTCLGTAILVALYFVSPLSRLSEVTVSGNKSVESQAIIQQSKLETGSGLWEQYSNRNYFSANIQKKFPIIKKANIKLNGINSFKIDIQEYQIVALAATKGGYHPILENGKTLAETTKAAESGKPIFENFKEDKLIPELMASYNKLPQEIKQGISEIKYAPSKTNKDLINVYMNDGNRVIVNISDLSEKMAYYSQVAEQMDKPGIVDMEVGIFSYPYEKESEETGSEVSEDSAVENQEVVDPNAGVATDGANNGTPTNGENQEVQQAE</sequence>
<gene>
    <name evidence="1" type="primary">divIB</name>
    <name type="ordered locus">EF62_1429</name>
</gene>
<name>DIVIB_ENTF6</name>
<comment type="function">
    <text evidence="1">Cell division protein that may be involved in stabilizing or promoting the assembly of the division complex.</text>
</comment>
<comment type="subcellular location">
    <subcellularLocation>
        <location evidence="1">Cell membrane</location>
        <topology evidence="1">Single-pass type II membrane protein</topology>
    </subcellularLocation>
    <text evidence="1">Localizes to the division septum.</text>
</comment>
<comment type="similarity">
    <text evidence="1">Belongs to the FtsQ/DivIB family. DivIB subfamily.</text>
</comment>
<keyword id="KW-0131">Cell cycle</keyword>
<keyword id="KW-0132">Cell division</keyword>
<keyword id="KW-1003">Cell membrane</keyword>
<keyword id="KW-0472">Membrane</keyword>
<keyword id="KW-0812">Transmembrane</keyword>
<keyword id="KW-1133">Transmembrane helix</keyword>
<evidence type="ECO:0000255" key="1">
    <source>
        <dbReference type="HAMAP-Rule" id="MF_00912"/>
    </source>
</evidence>
<evidence type="ECO:0000255" key="2">
    <source>
        <dbReference type="PROSITE-ProRule" id="PRU01115"/>
    </source>
</evidence>
<evidence type="ECO:0000256" key="3">
    <source>
        <dbReference type="SAM" id="MobiDB-lite"/>
    </source>
</evidence>